<name>MAK5_COCIM</name>
<dbReference type="EC" id="3.6.4.13"/>
<dbReference type="EMBL" id="GG704911">
    <property type="protein sequence ID" value="EAS35975.3"/>
    <property type="molecule type" value="Genomic_DNA"/>
</dbReference>
<dbReference type="RefSeq" id="XP_001247558.1">
    <property type="nucleotide sequence ID" value="XM_001247557.2"/>
</dbReference>
<dbReference type="SMR" id="Q1E7Y4"/>
<dbReference type="FunCoup" id="Q1E7Y4">
    <property type="interactions" value="917"/>
</dbReference>
<dbReference type="STRING" id="246410.Q1E7Y4"/>
<dbReference type="GeneID" id="4568065"/>
<dbReference type="KEGG" id="cim:CIMG_01329"/>
<dbReference type="VEuPathDB" id="FungiDB:CIMG_01329"/>
<dbReference type="InParanoid" id="Q1E7Y4"/>
<dbReference type="OMA" id="QMIQKAR"/>
<dbReference type="OrthoDB" id="4310724at2759"/>
<dbReference type="Proteomes" id="UP000001261">
    <property type="component" value="Unassembled WGS sequence"/>
</dbReference>
<dbReference type="GO" id="GO:0005829">
    <property type="term" value="C:cytosol"/>
    <property type="evidence" value="ECO:0007669"/>
    <property type="project" value="TreeGrafter"/>
</dbReference>
<dbReference type="GO" id="GO:0005730">
    <property type="term" value="C:nucleolus"/>
    <property type="evidence" value="ECO:0007669"/>
    <property type="project" value="UniProtKB-SubCell"/>
</dbReference>
<dbReference type="GO" id="GO:0005524">
    <property type="term" value="F:ATP binding"/>
    <property type="evidence" value="ECO:0007669"/>
    <property type="project" value="UniProtKB-KW"/>
</dbReference>
<dbReference type="GO" id="GO:0016887">
    <property type="term" value="F:ATP hydrolysis activity"/>
    <property type="evidence" value="ECO:0007669"/>
    <property type="project" value="RHEA"/>
</dbReference>
<dbReference type="GO" id="GO:0003723">
    <property type="term" value="F:RNA binding"/>
    <property type="evidence" value="ECO:0007669"/>
    <property type="project" value="UniProtKB-KW"/>
</dbReference>
<dbReference type="GO" id="GO:0003724">
    <property type="term" value="F:RNA helicase activity"/>
    <property type="evidence" value="ECO:0007669"/>
    <property type="project" value="UniProtKB-EC"/>
</dbReference>
<dbReference type="GO" id="GO:0006364">
    <property type="term" value="P:rRNA processing"/>
    <property type="evidence" value="ECO:0007669"/>
    <property type="project" value="UniProtKB-KW"/>
</dbReference>
<dbReference type="CDD" id="cd17946">
    <property type="entry name" value="DEADc_DDX24"/>
    <property type="match status" value="1"/>
</dbReference>
<dbReference type="CDD" id="cd18787">
    <property type="entry name" value="SF2_C_DEAD"/>
    <property type="match status" value="1"/>
</dbReference>
<dbReference type="Gene3D" id="3.40.50.300">
    <property type="entry name" value="P-loop containing nucleotide triphosphate hydrolases"/>
    <property type="match status" value="2"/>
</dbReference>
<dbReference type="InterPro" id="IPR011545">
    <property type="entry name" value="DEAD/DEAH_box_helicase_dom"/>
</dbReference>
<dbReference type="InterPro" id="IPR050079">
    <property type="entry name" value="DEAD_box_RNA_helicase"/>
</dbReference>
<dbReference type="InterPro" id="IPR014001">
    <property type="entry name" value="Helicase_ATP-bd"/>
</dbReference>
<dbReference type="InterPro" id="IPR001650">
    <property type="entry name" value="Helicase_C-like"/>
</dbReference>
<dbReference type="InterPro" id="IPR027417">
    <property type="entry name" value="P-loop_NTPase"/>
</dbReference>
<dbReference type="InterPro" id="IPR000629">
    <property type="entry name" value="RNA-helicase_DEAD-box_CS"/>
</dbReference>
<dbReference type="InterPro" id="IPR014014">
    <property type="entry name" value="RNA_helicase_DEAD_Q_motif"/>
</dbReference>
<dbReference type="PANTHER" id="PTHR47959:SF1">
    <property type="entry name" value="ATP-DEPENDENT RNA HELICASE DBPA"/>
    <property type="match status" value="1"/>
</dbReference>
<dbReference type="PANTHER" id="PTHR47959">
    <property type="entry name" value="ATP-DEPENDENT RNA HELICASE RHLE-RELATED"/>
    <property type="match status" value="1"/>
</dbReference>
<dbReference type="Pfam" id="PF00270">
    <property type="entry name" value="DEAD"/>
    <property type="match status" value="1"/>
</dbReference>
<dbReference type="Pfam" id="PF00271">
    <property type="entry name" value="Helicase_C"/>
    <property type="match status" value="1"/>
</dbReference>
<dbReference type="SMART" id="SM00487">
    <property type="entry name" value="DEXDc"/>
    <property type="match status" value="1"/>
</dbReference>
<dbReference type="SMART" id="SM00490">
    <property type="entry name" value="HELICc"/>
    <property type="match status" value="1"/>
</dbReference>
<dbReference type="SUPFAM" id="SSF52540">
    <property type="entry name" value="P-loop containing nucleoside triphosphate hydrolases"/>
    <property type="match status" value="1"/>
</dbReference>
<dbReference type="PROSITE" id="PS00039">
    <property type="entry name" value="DEAD_ATP_HELICASE"/>
    <property type="match status" value="1"/>
</dbReference>
<dbReference type="PROSITE" id="PS51192">
    <property type="entry name" value="HELICASE_ATP_BIND_1"/>
    <property type="match status" value="1"/>
</dbReference>
<dbReference type="PROSITE" id="PS51194">
    <property type="entry name" value="HELICASE_CTER"/>
    <property type="match status" value="1"/>
</dbReference>
<dbReference type="PROSITE" id="PS51195">
    <property type="entry name" value="Q_MOTIF"/>
    <property type="match status" value="1"/>
</dbReference>
<reference key="1">
    <citation type="journal article" date="2009" name="Genome Res.">
        <title>Comparative genomic analyses of the human fungal pathogens Coccidioides and their relatives.</title>
        <authorList>
            <person name="Sharpton T.J."/>
            <person name="Stajich J.E."/>
            <person name="Rounsley S.D."/>
            <person name="Gardner M.J."/>
            <person name="Wortman J.R."/>
            <person name="Jordar V.S."/>
            <person name="Maiti R."/>
            <person name="Kodira C.D."/>
            <person name="Neafsey D.E."/>
            <person name="Zeng Q."/>
            <person name="Hung C.-Y."/>
            <person name="McMahan C."/>
            <person name="Muszewska A."/>
            <person name="Grynberg M."/>
            <person name="Mandel M.A."/>
            <person name="Kellner E.M."/>
            <person name="Barker B.M."/>
            <person name="Galgiani J.N."/>
            <person name="Orbach M.J."/>
            <person name="Kirkland T.N."/>
            <person name="Cole G.T."/>
            <person name="Henn M.R."/>
            <person name="Birren B.W."/>
            <person name="Taylor J.W."/>
        </authorList>
    </citation>
    <scope>NUCLEOTIDE SEQUENCE [LARGE SCALE GENOMIC DNA]</scope>
    <source>
        <strain>RS</strain>
    </source>
</reference>
<reference key="2">
    <citation type="journal article" date="2010" name="Genome Res.">
        <title>Population genomic sequencing of Coccidioides fungi reveals recent hybridization and transposon control.</title>
        <authorList>
            <person name="Neafsey D.E."/>
            <person name="Barker B.M."/>
            <person name="Sharpton T.J."/>
            <person name="Stajich J.E."/>
            <person name="Park D.J."/>
            <person name="Whiston E."/>
            <person name="Hung C.-Y."/>
            <person name="McMahan C."/>
            <person name="White J."/>
            <person name="Sykes S."/>
            <person name="Heiman D."/>
            <person name="Young S."/>
            <person name="Zeng Q."/>
            <person name="Abouelleil A."/>
            <person name="Aftuck L."/>
            <person name="Bessette D."/>
            <person name="Brown A."/>
            <person name="FitzGerald M."/>
            <person name="Lui A."/>
            <person name="Macdonald J.P."/>
            <person name="Priest M."/>
            <person name="Orbach M.J."/>
            <person name="Galgiani J.N."/>
            <person name="Kirkland T.N."/>
            <person name="Cole G.T."/>
            <person name="Birren B.W."/>
            <person name="Henn M.R."/>
            <person name="Taylor J.W."/>
            <person name="Rounsley S.D."/>
        </authorList>
    </citation>
    <scope>GENOME REANNOTATION</scope>
    <source>
        <strain>RS</strain>
    </source>
</reference>
<sequence>MAQKRSHNHKDHTAKAIKRRKFNAATAKSSDDAAHDIVSVDQLDWKTVTLPDRLDDAEGFYGLEEIEGVDILRPSGGGEIKFKASKSKIKGILKNSTDKSGQPAEDWEEWSGFGDDSEDGDGTTLEAEKKAENHGKVNDRRTKTNNSNKEKESNKLPKDRGPRIKTDNGIKTGVSFAALQDEVEEDVDVSAWDSLDLSAELQTSLGRLKFSSPTPIQSACIPAVLQGHDVIGKASTGSGKTLAFGIPIVEYFLGKYRGGRAPTASEERESTKEPMALILSPTRELAHQLNKHLTDLVNHAPNTQVRIATVTGGLSIYKQQRLLADADIIIATPGRLWEVVGSMTGFLSKLKKIRFLVIDEADRLLSEGHFKEVEEILNAIDKVEITEEAYGERSEREPEPEPDEEKKAEPRQTLVFSATFHKGLQQKLSGKIRYRNDDLLDKKESMEYLLRKLNFREERPKFIDVNPISQMAQNLKEGLVQCAPMDKDLLLYTLLLYHPKHRTLVFTNSISAVRRLTQLLQNLNLPTFALHSSMAQKARLRSVERFSSLSSDPSSILVATDVAARGLDIKGIDLIVHYHIPRTADTYVHRSGRTARASASGKSILICAPEETTGVARLVAKIHSNKKDSSATESKMEKKVPLQSVDLDRRIIDRLRPRVTLAKKITESILAKEKLSSEDDWLRSAAEDLGVDYDSDEFAEQQSKGKGKGRGRGGGRQAREQKAASLSKAELAGLKAQLRELVSKKVNVGISEKYLTAGRVDVDALLRGEGNDAFLGHVEKLSF</sequence>
<protein>
    <recommendedName>
        <fullName>ATP-dependent RNA helicase MAK5</fullName>
        <ecNumber>3.6.4.13</ecNumber>
    </recommendedName>
</protein>
<keyword id="KW-0067">ATP-binding</keyword>
<keyword id="KW-0347">Helicase</keyword>
<keyword id="KW-0378">Hydrolase</keyword>
<keyword id="KW-0547">Nucleotide-binding</keyword>
<keyword id="KW-0539">Nucleus</keyword>
<keyword id="KW-1185">Reference proteome</keyword>
<keyword id="KW-0690">Ribosome biogenesis</keyword>
<keyword id="KW-0694">RNA-binding</keyword>
<keyword id="KW-0698">rRNA processing</keyword>
<proteinExistence type="inferred from homology"/>
<accession>Q1E7Y4</accession>
<accession>J3KJ71</accession>
<feature type="chain" id="PRO_0000256020" description="ATP-dependent RNA helicase MAK5">
    <location>
        <begin position="1"/>
        <end position="783"/>
    </location>
</feature>
<feature type="domain" description="Helicase ATP-binding" evidence="2">
    <location>
        <begin position="221"/>
        <end position="438"/>
    </location>
</feature>
<feature type="domain" description="Helicase C-terminal" evidence="3">
    <location>
        <begin position="490"/>
        <end position="648"/>
    </location>
</feature>
<feature type="region of interest" description="Disordered" evidence="4">
    <location>
        <begin position="1"/>
        <end position="32"/>
    </location>
</feature>
<feature type="region of interest" description="Disordered" evidence="4">
    <location>
        <begin position="94"/>
        <end position="168"/>
    </location>
</feature>
<feature type="region of interest" description="Disordered" evidence="4">
    <location>
        <begin position="388"/>
        <end position="410"/>
    </location>
</feature>
<feature type="region of interest" description="Disordered" evidence="4">
    <location>
        <begin position="696"/>
        <end position="719"/>
    </location>
</feature>
<feature type="short sequence motif" description="Q motif">
    <location>
        <begin position="190"/>
        <end position="218"/>
    </location>
</feature>
<feature type="short sequence motif" description="DEAD box">
    <location>
        <begin position="359"/>
        <end position="362"/>
    </location>
</feature>
<feature type="compositionally biased region" description="Basic residues" evidence="4">
    <location>
        <begin position="1"/>
        <end position="22"/>
    </location>
</feature>
<feature type="compositionally biased region" description="Acidic residues" evidence="4">
    <location>
        <begin position="105"/>
        <end position="121"/>
    </location>
</feature>
<feature type="compositionally biased region" description="Basic and acidic residues" evidence="4">
    <location>
        <begin position="126"/>
        <end position="168"/>
    </location>
</feature>
<feature type="binding site" evidence="2">
    <location>
        <begin position="234"/>
        <end position="241"/>
    </location>
    <ligand>
        <name>ATP</name>
        <dbReference type="ChEBI" id="CHEBI:30616"/>
    </ligand>
</feature>
<gene>
    <name type="primary">MAK5</name>
    <name type="ORF">CIMG_01329</name>
</gene>
<organism>
    <name type="scientific">Coccidioides immitis (strain RS)</name>
    <name type="common">Valley fever fungus</name>
    <dbReference type="NCBI Taxonomy" id="246410"/>
    <lineage>
        <taxon>Eukaryota</taxon>
        <taxon>Fungi</taxon>
        <taxon>Dikarya</taxon>
        <taxon>Ascomycota</taxon>
        <taxon>Pezizomycotina</taxon>
        <taxon>Eurotiomycetes</taxon>
        <taxon>Eurotiomycetidae</taxon>
        <taxon>Onygenales</taxon>
        <taxon>Onygenaceae</taxon>
        <taxon>Coccidioides</taxon>
    </lineage>
</organism>
<evidence type="ECO:0000250" key="1"/>
<evidence type="ECO:0000255" key="2">
    <source>
        <dbReference type="PROSITE-ProRule" id="PRU00541"/>
    </source>
</evidence>
<evidence type="ECO:0000255" key="3">
    <source>
        <dbReference type="PROSITE-ProRule" id="PRU00542"/>
    </source>
</evidence>
<evidence type="ECO:0000256" key="4">
    <source>
        <dbReference type="SAM" id="MobiDB-lite"/>
    </source>
</evidence>
<evidence type="ECO:0000305" key="5"/>
<comment type="function">
    <text evidence="1">ATP-binding RNA helicase involved in the biogenesis of 60S ribosomal subunits and is required for the normal formation of 25S and 5.8S rRNAs.</text>
</comment>
<comment type="catalytic activity">
    <reaction>
        <text>ATP + H2O = ADP + phosphate + H(+)</text>
        <dbReference type="Rhea" id="RHEA:13065"/>
        <dbReference type="ChEBI" id="CHEBI:15377"/>
        <dbReference type="ChEBI" id="CHEBI:15378"/>
        <dbReference type="ChEBI" id="CHEBI:30616"/>
        <dbReference type="ChEBI" id="CHEBI:43474"/>
        <dbReference type="ChEBI" id="CHEBI:456216"/>
        <dbReference type="EC" id="3.6.4.13"/>
    </reaction>
</comment>
<comment type="subcellular location">
    <subcellularLocation>
        <location evidence="1">Nucleus</location>
        <location evidence="1">Nucleolus</location>
    </subcellularLocation>
</comment>
<comment type="domain">
    <text>The Q motif is unique to and characteristic of the DEAD box family of RNA helicases and controls ATP binding and hydrolysis.</text>
</comment>
<comment type="similarity">
    <text evidence="5">Belongs to the DEAD box helicase family. DDX24/MAK5 subfamily.</text>
</comment>